<name>YIDD_RICFE</name>
<protein>
    <recommendedName>
        <fullName evidence="1">Putative membrane protein insertion efficiency factor</fullName>
    </recommendedName>
</protein>
<reference key="1">
    <citation type="journal article" date="2005" name="PLoS Biol.">
        <title>The genome sequence of Rickettsia felis identifies the first putative conjugative plasmid in an obligate intracellular parasite.</title>
        <authorList>
            <person name="Ogata H."/>
            <person name="Renesto P."/>
            <person name="Audic S."/>
            <person name="Robert C."/>
            <person name="Blanc G."/>
            <person name="Fournier P.-E."/>
            <person name="Parinello H."/>
            <person name="Claverie J.-M."/>
            <person name="Raoult D."/>
        </authorList>
    </citation>
    <scope>NUCLEOTIDE SEQUENCE [LARGE SCALE GENOMIC DNA]</scope>
    <source>
        <strain>ATCC VR-1525 / URRWXCal2</strain>
    </source>
</reference>
<comment type="function">
    <text evidence="1">Could be involved in insertion of integral membrane proteins into the membrane.</text>
</comment>
<comment type="subcellular location">
    <subcellularLocation>
        <location evidence="1">Cell inner membrane</location>
        <topology evidence="1">Peripheral membrane protein</topology>
        <orientation evidence="1">Cytoplasmic side</orientation>
    </subcellularLocation>
</comment>
<comment type="similarity">
    <text evidence="1">Belongs to the UPF0161 family.</text>
</comment>
<proteinExistence type="inferred from homology"/>
<keyword id="KW-0997">Cell inner membrane</keyword>
<keyword id="KW-1003">Cell membrane</keyword>
<keyword id="KW-0472">Membrane</keyword>
<organism>
    <name type="scientific">Rickettsia felis (strain ATCC VR-1525 / URRWXCal2)</name>
    <name type="common">Rickettsia azadi</name>
    <dbReference type="NCBI Taxonomy" id="315456"/>
    <lineage>
        <taxon>Bacteria</taxon>
        <taxon>Pseudomonadati</taxon>
        <taxon>Pseudomonadota</taxon>
        <taxon>Alphaproteobacteria</taxon>
        <taxon>Rickettsiales</taxon>
        <taxon>Rickettsiaceae</taxon>
        <taxon>Rickettsieae</taxon>
        <taxon>Rickettsia</taxon>
        <taxon>spotted fever group</taxon>
    </lineage>
</organism>
<accession>Q4UM10</accession>
<feature type="chain" id="PRO_0000253159" description="Putative membrane protein insertion efficiency factor">
    <location>
        <begin position="1"/>
        <end position="82"/>
    </location>
</feature>
<gene>
    <name type="ordered locus">RF_0562</name>
</gene>
<evidence type="ECO:0000255" key="1">
    <source>
        <dbReference type="HAMAP-Rule" id="MF_00386"/>
    </source>
</evidence>
<sequence length="82" mass="9499">MTRILLLLLRFYQYFISPLLGNNCRFHPTCSEYAKEAITTHGTLKGLWLTFKRIIKCQPFCNGGYDAVPLSIKNSKLFNKKI</sequence>
<dbReference type="EMBL" id="CP000053">
    <property type="protein sequence ID" value="AAY61413.1"/>
    <property type="molecule type" value="Genomic_DNA"/>
</dbReference>
<dbReference type="STRING" id="315456.RF_0562"/>
<dbReference type="KEGG" id="rfe:RF_0562"/>
<dbReference type="eggNOG" id="COG0759">
    <property type="taxonomic scope" value="Bacteria"/>
</dbReference>
<dbReference type="HOGENOM" id="CLU_144811_5_2_5"/>
<dbReference type="OrthoDB" id="9801753at2"/>
<dbReference type="Proteomes" id="UP000008548">
    <property type="component" value="Chromosome"/>
</dbReference>
<dbReference type="GO" id="GO:0005886">
    <property type="term" value="C:plasma membrane"/>
    <property type="evidence" value="ECO:0007669"/>
    <property type="project" value="UniProtKB-SubCell"/>
</dbReference>
<dbReference type="HAMAP" id="MF_00386">
    <property type="entry name" value="UPF0161_YidD"/>
    <property type="match status" value="1"/>
</dbReference>
<dbReference type="InterPro" id="IPR002696">
    <property type="entry name" value="Membr_insert_effic_factor_YidD"/>
</dbReference>
<dbReference type="NCBIfam" id="TIGR00278">
    <property type="entry name" value="membrane protein insertion efficiency factor YidD"/>
    <property type="match status" value="1"/>
</dbReference>
<dbReference type="PANTHER" id="PTHR33383">
    <property type="entry name" value="MEMBRANE PROTEIN INSERTION EFFICIENCY FACTOR-RELATED"/>
    <property type="match status" value="1"/>
</dbReference>
<dbReference type="PANTHER" id="PTHR33383:SF1">
    <property type="entry name" value="MEMBRANE PROTEIN INSERTION EFFICIENCY FACTOR-RELATED"/>
    <property type="match status" value="1"/>
</dbReference>
<dbReference type="Pfam" id="PF01809">
    <property type="entry name" value="YidD"/>
    <property type="match status" value="1"/>
</dbReference>
<dbReference type="SMART" id="SM01234">
    <property type="entry name" value="Haemolytic"/>
    <property type="match status" value="1"/>
</dbReference>